<reference key="1">
    <citation type="journal article" date="2004" name="J. Mol. Microbiol. Biotechnol.">
        <title>The complete genome sequence of Bacillus licheniformis DSM13, an organism with great industrial potential.</title>
        <authorList>
            <person name="Veith B."/>
            <person name="Herzberg C."/>
            <person name="Steckel S."/>
            <person name="Feesche J."/>
            <person name="Maurer K.H."/>
            <person name="Ehrenreich P."/>
            <person name="Baeumer S."/>
            <person name="Henne A."/>
            <person name="Liesegang H."/>
            <person name="Merkl R."/>
            <person name="Ehrenreich A."/>
            <person name="Gottschalk G."/>
        </authorList>
    </citation>
    <scope>NUCLEOTIDE SEQUENCE [LARGE SCALE GENOMIC DNA]</scope>
    <source>
        <strain>ATCC 14580 / DSM 13 / JCM 2505 / CCUG 7422 / NBRC 12200 / NCIMB 9375 / NCTC 10341 / NRRL NRS-1264 / Gibson 46</strain>
    </source>
</reference>
<reference key="2">
    <citation type="journal article" date="2004" name="Genome Biol.">
        <title>Complete genome sequence of the industrial bacterium Bacillus licheniformis and comparisons with closely related Bacillus species.</title>
        <authorList>
            <person name="Rey M.W."/>
            <person name="Ramaiya P."/>
            <person name="Nelson B.A."/>
            <person name="Brody-Karpin S.D."/>
            <person name="Zaretsky E.J."/>
            <person name="Tang M."/>
            <person name="Lopez de Leon A."/>
            <person name="Xiang H."/>
            <person name="Gusti V."/>
            <person name="Clausen I.G."/>
            <person name="Olsen P.B."/>
            <person name="Rasmussen M.D."/>
            <person name="Andersen J.T."/>
            <person name="Joergensen P.L."/>
            <person name="Larsen T.S."/>
            <person name="Sorokin A."/>
            <person name="Bolotin A."/>
            <person name="Lapidus A."/>
            <person name="Galleron N."/>
            <person name="Ehrlich S.D."/>
            <person name="Berka R.M."/>
        </authorList>
    </citation>
    <scope>NUCLEOTIDE SEQUENCE [LARGE SCALE GENOMIC DNA]</scope>
    <source>
        <strain>ATCC 14580 / DSM 13 / JCM 2505 / CCUG 7422 / NBRC 12200 / NCIMB 9375 / NCTC 10341 / NRRL NRS-1264 / Gibson 46</strain>
    </source>
</reference>
<dbReference type="EC" id="3.1.26.11" evidence="1"/>
<dbReference type="EMBL" id="AE017333">
    <property type="protein sequence ID" value="AAU41428.1"/>
    <property type="molecule type" value="Genomic_DNA"/>
</dbReference>
<dbReference type="EMBL" id="CP000002">
    <property type="protein sequence ID" value="AAU24070.1"/>
    <property type="molecule type" value="Genomic_DNA"/>
</dbReference>
<dbReference type="RefSeq" id="WP_009327934.1">
    <property type="nucleotide sequence ID" value="NC_006322.1"/>
</dbReference>
<dbReference type="SMR" id="Q65HN6"/>
<dbReference type="STRING" id="279010.BL05258"/>
<dbReference type="GeneID" id="92860853"/>
<dbReference type="KEGG" id="bld:BLi02554"/>
<dbReference type="KEGG" id="bli:BL05258"/>
<dbReference type="eggNOG" id="COG1234">
    <property type="taxonomic scope" value="Bacteria"/>
</dbReference>
<dbReference type="HOGENOM" id="CLU_031317_2_0_9"/>
<dbReference type="Proteomes" id="UP000000606">
    <property type="component" value="Chromosome"/>
</dbReference>
<dbReference type="GO" id="GO:0042781">
    <property type="term" value="F:3'-tRNA processing endoribonuclease activity"/>
    <property type="evidence" value="ECO:0007669"/>
    <property type="project" value="UniProtKB-UniRule"/>
</dbReference>
<dbReference type="GO" id="GO:0008270">
    <property type="term" value="F:zinc ion binding"/>
    <property type="evidence" value="ECO:0007669"/>
    <property type="project" value="UniProtKB-UniRule"/>
</dbReference>
<dbReference type="CDD" id="cd07717">
    <property type="entry name" value="RNaseZ_ZiPD-like_MBL-fold"/>
    <property type="match status" value="1"/>
</dbReference>
<dbReference type="FunFam" id="3.60.15.10:FF:000002">
    <property type="entry name" value="Ribonuclease Z"/>
    <property type="match status" value="1"/>
</dbReference>
<dbReference type="Gene3D" id="3.60.15.10">
    <property type="entry name" value="Ribonuclease Z/Hydroxyacylglutathione hydrolase-like"/>
    <property type="match status" value="1"/>
</dbReference>
<dbReference type="HAMAP" id="MF_01818">
    <property type="entry name" value="RNase_Z_BN"/>
    <property type="match status" value="1"/>
</dbReference>
<dbReference type="InterPro" id="IPR001279">
    <property type="entry name" value="Metallo-B-lactamas"/>
</dbReference>
<dbReference type="InterPro" id="IPR036866">
    <property type="entry name" value="RibonucZ/Hydroxyglut_hydro"/>
</dbReference>
<dbReference type="InterPro" id="IPR013471">
    <property type="entry name" value="RNase_Z/BN"/>
</dbReference>
<dbReference type="NCBIfam" id="NF000800">
    <property type="entry name" value="PRK00055.1-1"/>
    <property type="match status" value="1"/>
</dbReference>
<dbReference type="NCBIfam" id="NF000801">
    <property type="entry name" value="PRK00055.1-3"/>
    <property type="match status" value="1"/>
</dbReference>
<dbReference type="NCBIfam" id="TIGR02651">
    <property type="entry name" value="RNase_Z"/>
    <property type="match status" value="1"/>
</dbReference>
<dbReference type="PANTHER" id="PTHR46018">
    <property type="entry name" value="ZINC PHOSPHODIESTERASE ELAC PROTEIN 1"/>
    <property type="match status" value="1"/>
</dbReference>
<dbReference type="PANTHER" id="PTHR46018:SF2">
    <property type="entry name" value="ZINC PHOSPHODIESTERASE ELAC PROTEIN 1"/>
    <property type="match status" value="1"/>
</dbReference>
<dbReference type="Pfam" id="PF12706">
    <property type="entry name" value="Lactamase_B_2"/>
    <property type="match status" value="2"/>
</dbReference>
<dbReference type="SUPFAM" id="SSF56281">
    <property type="entry name" value="Metallo-hydrolase/oxidoreductase"/>
    <property type="match status" value="1"/>
</dbReference>
<gene>
    <name evidence="1" type="primary">rnz</name>
    <name type="ordered locus">BLi02554</name>
    <name type="ordered locus">BL05258</name>
</gene>
<evidence type="ECO:0000255" key="1">
    <source>
        <dbReference type="HAMAP-Rule" id="MF_01818"/>
    </source>
</evidence>
<proteinExistence type="inferred from homology"/>
<name>RNZ_BACLD</name>
<accession>Q65HN6</accession>
<accession>Q62T39</accession>
<organism>
    <name type="scientific">Bacillus licheniformis (strain ATCC 14580 / DSM 13 / JCM 2505 / CCUG 7422 / NBRC 12200 / NCIMB 9375 / NCTC 10341 / NRRL NRS-1264 / Gibson 46)</name>
    <dbReference type="NCBI Taxonomy" id="279010"/>
    <lineage>
        <taxon>Bacteria</taxon>
        <taxon>Bacillati</taxon>
        <taxon>Bacillota</taxon>
        <taxon>Bacilli</taxon>
        <taxon>Bacillales</taxon>
        <taxon>Bacillaceae</taxon>
        <taxon>Bacillus</taxon>
    </lineage>
</organism>
<comment type="function">
    <text evidence="1">Zinc phosphodiesterase, which displays some tRNA 3'-processing endonuclease activity. Probably involved in tRNA maturation, by removing a 3'-trailer from precursor tRNA.</text>
</comment>
<comment type="catalytic activity">
    <reaction evidence="1">
        <text>Endonucleolytic cleavage of RNA, removing extra 3' nucleotides from tRNA precursor, generating 3' termini of tRNAs. A 3'-hydroxy group is left at the tRNA terminus and a 5'-phosphoryl group is left at the trailer molecule.</text>
        <dbReference type="EC" id="3.1.26.11"/>
    </reaction>
</comment>
<comment type="cofactor">
    <cofactor evidence="1">
        <name>Zn(2+)</name>
        <dbReference type="ChEBI" id="CHEBI:29105"/>
    </cofactor>
    <text evidence="1">Binds 2 Zn(2+) ions.</text>
</comment>
<comment type="subunit">
    <text evidence="1">Homodimer.</text>
</comment>
<comment type="similarity">
    <text evidence="1">Belongs to the RNase Z family.</text>
</comment>
<protein>
    <recommendedName>
        <fullName evidence="1">Ribonuclease Z</fullName>
        <shortName evidence="1">RNase Z</shortName>
        <ecNumber evidence="1">3.1.26.11</ecNumber>
    </recommendedName>
    <alternativeName>
        <fullName evidence="1">tRNA 3 endonuclease</fullName>
    </alternativeName>
    <alternativeName>
        <fullName evidence="1">tRNase Z</fullName>
    </alternativeName>
</protein>
<keyword id="KW-0255">Endonuclease</keyword>
<keyword id="KW-0378">Hydrolase</keyword>
<keyword id="KW-0479">Metal-binding</keyword>
<keyword id="KW-0540">Nuclease</keyword>
<keyword id="KW-1185">Reference proteome</keyword>
<keyword id="KW-0819">tRNA processing</keyword>
<keyword id="KW-0862">Zinc</keyword>
<sequence length="307" mass="33626">MELLFLGTGAGIPAKTRNVTSVALKLLEERRSVWLFDCGEATQHQILHTSIKPRKIEKIFITHLHGDHVYGLPGLVSSRSFQGGEGPLTVYGPQGIKTFLETALDVSGTHVTYPLVIKEIGEGTVFEDDQFIVTARSVSHGIPAFGYRVQEKDVPGALDAEALKEIGVSPGPVYQKLKNGETVTLEDGRTIHGADFIGPPKKGRIVAFSGDTRPCENVKRLAEKADVLIHEATFAKGDRELAGDYYHSTSEQAAETAREACAKKLILTHISARYQGENVLELVDEAKAIFPDTVAAFDFYEHEIKRT</sequence>
<feature type="chain" id="PRO_0000155847" description="Ribonuclease Z">
    <location>
        <begin position="1"/>
        <end position="307"/>
    </location>
</feature>
<feature type="active site" description="Proton acceptor" evidence="1">
    <location>
        <position position="67"/>
    </location>
</feature>
<feature type="binding site" evidence="1">
    <location>
        <position position="63"/>
    </location>
    <ligand>
        <name>Zn(2+)</name>
        <dbReference type="ChEBI" id="CHEBI:29105"/>
        <label>1</label>
        <note>catalytic</note>
    </ligand>
</feature>
<feature type="binding site" evidence="1">
    <location>
        <position position="65"/>
    </location>
    <ligand>
        <name>Zn(2+)</name>
        <dbReference type="ChEBI" id="CHEBI:29105"/>
        <label>1</label>
        <note>catalytic</note>
    </ligand>
</feature>
<feature type="binding site" evidence="1">
    <location>
        <position position="67"/>
    </location>
    <ligand>
        <name>Zn(2+)</name>
        <dbReference type="ChEBI" id="CHEBI:29105"/>
        <label>2</label>
        <note>catalytic</note>
    </ligand>
</feature>
<feature type="binding site" evidence="1">
    <location>
        <position position="68"/>
    </location>
    <ligand>
        <name>Zn(2+)</name>
        <dbReference type="ChEBI" id="CHEBI:29105"/>
        <label>2</label>
        <note>catalytic</note>
    </ligand>
</feature>
<feature type="binding site" evidence="1">
    <location>
        <position position="140"/>
    </location>
    <ligand>
        <name>Zn(2+)</name>
        <dbReference type="ChEBI" id="CHEBI:29105"/>
        <label>1</label>
        <note>catalytic</note>
    </ligand>
</feature>
<feature type="binding site" evidence="1">
    <location>
        <position position="211"/>
    </location>
    <ligand>
        <name>Zn(2+)</name>
        <dbReference type="ChEBI" id="CHEBI:29105"/>
        <label>1</label>
        <note>catalytic</note>
    </ligand>
</feature>
<feature type="binding site" evidence="1">
    <location>
        <position position="211"/>
    </location>
    <ligand>
        <name>Zn(2+)</name>
        <dbReference type="ChEBI" id="CHEBI:29105"/>
        <label>2</label>
        <note>catalytic</note>
    </ligand>
</feature>
<feature type="binding site" evidence="1">
    <location>
        <position position="269"/>
    </location>
    <ligand>
        <name>Zn(2+)</name>
        <dbReference type="ChEBI" id="CHEBI:29105"/>
        <label>2</label>
        <note>catalytic</note>
    </ligand>
</feature>